<protein>
    <recommendedName>
        <fullName>L-amino-acid oxidase</fullName>
        <shortName evidence="4">LAAO</shortName>
        <shortName>LAO</shortName>
        <ecNumber evidence="2">1.4.3.2</ecNumber>
    </recommendedName>
</protein>
<feature type="signal peptide" evidence="2">
    <location>
        <begin position="1"/>
        <end position="18"/>
    </location>
</feature>
<feature type="chain" id="PRO_5000140379" description="L-amino-acid oxidase">
    <location>
        <begin position="19"/>
        <end position="517"/>
    </location>
</feature>
<feature type="binding site" evidence="2">
    <location>
        <begin position="62"/>
        <end position="63"/>
    </location>
    <ligand>
        <name>FAD</name>
        <dbReference type="ChEBI" id="CHEBI:57692"/>
    </ligand>
</feature>
<feature type="binding site" evidence="2">
    <location>
        <begin position="82"/>
        <end position="83"/>
    </location>
    <ligand>
        <name>FAD</name>
        <dbReference type="ChEBI" id="CHEBI:57692"/>
    </ligand>
</feature>
<feature type="binding site" evidence="2">
    <location>
        <position position="90"/>
    </location>
    <ligand>
        <name>FAD</name>
        <dbReference type="ChEBI" id="CHEBI:57692"/>
    </ligand>
</feature>
<feature type="binding site" evidence="2">
    <location>
        <begin position="106"/>
        <end position="109"/>
    </location>
    <ligand>
        <name>FAD</name>
        <dbReference type="ChEBI" id="CHEBI:57692"/>
    </ligand>
</feature>
<feature type="binding site" evidence="2">
    <location>
        <position position="109"/>
    </location>
    <ligand>
        <name>substrate</name>
    </ligand>
</feature>
<feature type="binding site" evidence="2">
    <location>
        <position position="280"/>
    </location>
    <ligand>
        <name>FAD</name>
        <dbReference type="ChEBI" id="CHEBI:57692"/>
    </ligand>
</feature>
<feature type="binding site" evidence="2">
    <location>
        <position position="391"/>
    </location>
    <ligand>
        <name>substrate</name>
    </ligand>
</feature>
<feature type="binding site" evidence="2">
    <location>
        <position position="476"/>
    </location>
    <ligand>
        <name>FAD</name>
        <dbReference type="ChEBI" id="CHEBI:57692"/>
    </ligand>
</feature>
<feature type="binding site" evidence="2">
    <location>
        <begin position="483"/>
        <end position="488"/>
    </location>
    <ligand>
        <name>FAD</name>
        <dbReference type="ChEBI" id="CHEBI:57692"/>
    </ligand>
</feature>
<feature type="binding site" evidence="2">
    <location>
        <begin position="483"/>
        <end position="484"/>
    </location>
    <ligand>
        <name>substrate</name>
    </ligand>
</feature>
<feature type="glycosylation site" description="N-linked (GlcNAc...) asparagine" evidence="3">
    <location>
        <position position="191"/>
    </location>
</feature>
<feature type="glycosylation site" description="N-linked (GlcNAc...) asparagine" evidence="3">
    <location>
        <position position="380"/>
    </location>
</feature>
<feature type="disulfide bond" evidence="2">
    <location>
        <begin position="29"/>
        <end position="192"/>
    </location>
</feature>
<feature type="disulfide bond" evidence="2">
    <location>
        <begin position="350"/>
        <end position="431"/>
    </location>
</feature>
<proteinExistence type="evidence at transcript level"/>
<organism>
    <name type="scientific">Notechis scutatus scutatus</name>
    <name type="common">Mainland tiger snake</name>
    <name type="synonym">Common tiger snake</name>
    <dbReference type="NCBI Taxonomy" id="70142"/>
    <lineage>
        <taxon>Eukaryota</taxon>
        <taxon>Metazoa</taxon>
        <taxon>Chordata</taxon>
        <taxon>Craniata</taxon>
        <taxon>Vertebrata</taxon>
        <taxon>Euteleostomi</taxon>
        <taxon>Lepidosauria</taxon>
        <taxon>Squamata</taxon>
        <taxon>Bifurcata</taxon>
        <taxon>Unidentata</taxon>
        <taxon>Episquamata</taxon>
        <taxon>Toxicofera</taxon>
        <taxon>Serpentes</taxon>
        <taxon>Colubroidea</taxon>
        <taxon>Elapidae</taxon>
        <taxon>Hydrophiinae</taxon>
        <taxon>Notechis</taxon>
    </lineage>
</organism>
<dbReference type="EC" id="1.4.3.2" evidence="2"/>
<dbReference type="EMBL" id="DQ088991">
    <property type="protein sequence ID" value="AAY89681.1"/>
    <property type="molecule type" value="mRNA"/>
</dbReference>
<dbReference type="SMR" id="Q4JHE2"/>
<dbReference type="GO" id="GO:0005576">
    <property type="term" value="C:extracellular region"/>
    <property type="evidence" value="ECO:0007669"/>
    <property type="project" value="UniProtKB-SubCell"/>
</dbReference>
<dbReference type="GO" id="GO:0001716">
    <property type="term" value="F:L-amino-acid oxidase activity"/>
    <property type="evidence" value="ECO:0007669"/>
    <property type="project" value="UniProtKB-EC"/>
</dbReference>
<dbReference type="GO" id="GO:0090729">
    <property type="term" value="F:toxin activity"/>
    <property type="evidence" value="ECO:0007669"/>
    <property type="project" value="UniProtKB-KW"/>
</dbReference>
<dbReference type="GO" id="GO:0009063">
    <property type="term" value="P:amino acid catabolic process"/>
    <property type="evidence" value="ECO:0007669"/>
    <property type="project" value="TreeGrafter"/>
</dbReference>
<dbReference type="GO" id="GO:0006915">
    <property type="term" value="P:apoptotic process"/>
    <property type="evidence" value="ECO:0007669"/>
    <property type="project" value="UniProtKB-KW"/>
</dbReference>
<dbReference type="GO" id="GO:0042742">
    <property type="term" value="P:defense response to bacterium"/>
    <property type="evidence" value="ECO:0007669"/>
    <property type="project" value="UniProtKB-KW"/>
</dbReference>
<dbReference type="GO" id="GO:0031640">
    <property type="term" value="P:killing of cells of another organism"/>
    <property type="evidence" value="ECO:0007669"/>
    <property type="project" value="UniProtKB-KW"/>
</dbReference>
<dbReference type="FunFam" id="1.10.405.10:FF:000004">
    <property type="entry name" value="Amine oxidase"/>
    <property type="match status" value="1"/>
</dbReference>
<dbReference type="FunFam" id="3.50.50.60:FF:000450">
    <property type="entry name" value="Amine oxidase"/>
    <property type="match status" value="1"/>
</dbReference>
<dbReference type="Gene3D" id="3.90.660.10">
    <property type="match status" value="1"/>
</dbReference>
<dbReference type="Gene3D" id="3.50.50.60">
    <property type="entry name" value="FAD/NAD(P)-binding domain"/>
    <property type="match status" value="1"/>
</dbReference>
<dbReference type="Gene3D" id="1.10.405.10">
    <property type="entry name" value="Guanine Nucleotide Dissociation Inhibitor, domain 1"/>
    <property type="match status" value="1"/>
</dbReference>
<dbReference type="InterPro" id="IPR002937">
    <property type="entry name" value="Amino_oxidase"/>
</dbReference>
<dbReference type="InterPro" id="IPR036188">
    <property type="entry name" value="FAD/NAD-bd_sf"/>
</dbReference>
<dbReference type="InterPro" id="IPR001613">
    <property type="entry name" value="Flavin_amine_oxidase"/>
</dbReference>
<dbReference type="InterPro" id="IPR050281">
    <property type="entry name" value="Flavin_monoamine_oxidase"/>
</dbReference>
<dbReference type="PANTHER" id="PTHR10742:SF355">
    <property type="entry name" value="AMINE OXIDASE"/>
    <property type="match status" value="1"/>
</dbReference>
<dbReference type="PANTHER" id="PTHR10742">
    <property type="entry name" value="FLAVIN MONOAMINE OXIDASE"/>
    <property type="match status" value="1"/>
</dbReference>
<dbReference type="Pfam" id="PF01593">
    <property type="entry name" value="Amino_oxidase"/>
    <property type="match status" value="1"/>
</dbReference>
<dbReference type="PRINTS" id="PR00757">
    <property type="entry name" value="AMINEOXDASEF"/>
</dbReference>
<dbReference type="SUPFAM" id="SSF54373">
    <property type="entry name" value="FAD-linked reductases, C-terminal domain"/>
    <property type="match status" value="1"/>
</dbReference>
<dbReference type="SUPFAM" id="SSF51905">
    <property type="entry name" value="FAD/NAD(P)-binding domain"/>
    <property type="match status" value="1"/>
</dbReference>
<sequence length="517" mass="59058">MNVFFMFSLLFLAALESCADDRRRPLEECFQEADYEEFLEIARNGLNETSNPKHVVVVGAGMAGLSAAYVLAGAGHNVTLLEASERVGGRVNTYRNETEGWYVNLGPMRLPERHRIIREYIRKFGLKLNEFLQENENAWYFIRNIRKRVWEVKKDPGVFKYPVEPSEEGKSASQLYRESLEKVIEELKRTNCSYILNKYDTYSTKEYLIKEGNLSRGAVDMIGKLPNEDSSYYLSFIESLKSDDLFSYEKRFDEIVGGFDQLPISMYQAIAEMVHLNAQVIKIQHNAEEVRVAYQTPAKTLSYVTADYVIVCSTSRAARRIYFEPPLPPKKAHALRSIHYRSGTKIFLTCTRKFWEADGIHGGKSTTDLPSRFIYYPNHNFTSDVGVIVAYTLADDADFFQALDIKTSADIVINDLSLIHQLPKEEIQALCYPSMIKKWSLDKYAMGAITSFTPYQFQDFIETVAAPVGRIYFAGEYTARVHGWLDSTIKSGLTAARDVNRASQKPSRRQLSNDNEL</sequence>
<reference key="1">
    <citation type="journal article" date="2005" name="Cell. Mol. Life Sci.">
        <title>Identification and analysis of venom gland-specific genes from the coastal taipan (Oxyuranus scutellatus) and related species.</title>
        <authorList>
            <person name="St Pierre L."/>
            <person name="Woods R."/>
            <person name="Earl S.T.H."/>
            <person name="Masci P.P."/>
            <person name="Lavin M.F."/>
        </authorList>
    </citation>
    <scope>NUCLEOTIDE SEQUENCE [MRNA]</scope>
    <source>
        <tissue>Venom gland</tissue>
    </source>
</reference>
<accession>Q4JHE2</accession>
<keyword id="KW-0044">Antibiotic</keyword>
<keyword id="KW-0929">Antimicrobial</keyword>
<keyword id="KW-0053">Apoptosis</keyword>
<keyword id="KW-0204">Cytolysis</keyword>
<keyword id="KW-1015">Disulfide bond</keyword>
<keyword id="KW-0274">FAD</keyword>
<keyword id="KW-0285">Flavoprotein</keyword>
<keyword id="KW-0325">Glycoprotein</keyword>
<keyword id="KW-0354">Hemolysis</keyword>
<keyword id="KW-1199">Hemostasis impairing toxin</keyword>
<keyword id="KW-0560">Oxidoreductase</keyword>
<keyword id="KW-0964">Secreted</keyword>
<keyword id="KW-0732">Signal</keyword>
<keyword id="KW-0800">Toxin</keyword>
<name>OXLA_NOTSC</name>
<evidence type="ECO:0000250" key="1">
    <source>
        <dbReference type="UniProtKB" id="P0CC17"/>
    </source>
</evidence>
<evidence type="ECO:0000250" key="2">
    <source>
        <dbReference type="UniProtKB" id="P81382"/>
    </source>
</evidence>
<evidence type="ECO:0000255" key="3"/>
<evidence type="ECO:0000303" key="4">
    <source>
    </source>
</evidence>
<evidence type="ECO:0000305" key="5"/>
<evidence type="ECO:0000305" key="6">
    <source>
    </source>
</evidence>
<comment type="function">
    <text evidence="1">Catalyzes an oxidative deamination of predominantly hydrophobic and aromatic L-amino acids, thus producing hydrogen peroxide that may contribute to the diverse toxic effects of this enzyme. Exhibits diverse biological activities, such as hemorrhage, hemolysis, edema, apoptosis of vascular endothelial cells or tumor cell lines, antibacterial and antiparasitic activities, as well as regulation of platelet aggregation. Effects of snake L-amino oxidases on platelets are controversial, since they either induce aggregation or inhibit agonist-induced aggregation. These different effects are probably due to different experimental conditions (By similarity).</text>
</comment>
<comment type="catalytic activity">
    <reaction evidence="2">
        <text>an L-alpha-amino acid + O2 + H2O = a 2-oxocarboxylate + H2O2 + NH4(+)</text>
        <dbReference type="Rhea" id="RHEA:13781"/>
        <dbReference type="ChEBI" id="CHEBI:15377"/>
        <dbReference type="ChEBI" id="CHEBI:15379"/>
        <dbReference type="ChEBI" id="CHEBI:16240"/>
        <dbReference type="ChEBI" id="CHEBI:28938"/>
        <dbReference type="ChEBI" id="CHEBI:35179"/>
        <dbReference type="ChEBI" id="CHEBI:59869"/>
        <dbReference type="EC" id="1.4.3.2"/>
    </reaction>
</comment>
<comment type="cofactor">
    <cofactor evidence="2">
        <name>FAD</name>
        <dbReference type="ChEBI" id="CHEBI:57692"/>
    </cofactor>
</comment>
<comment type="subunit">
    <text evidence="2">Homodimer; non-covalently linked.</text>
</comment>
<comment type="subcellular location">
    <subcellularLocation>
        <location evidence="6">Secreted</location>
    </subcellularLocation>
</comment>
<comment type="tissue specificity">
    <text evidence="6">Expressed by the venom gland.</text>
</comment>
<comment type="PTM">
    <text evidence="2">N-glycosylated.</text>
</comment>
<comment type="similarity">
    <text evidence="5">Belongs to the flavin monoamine oxidase family. FIG1 subfamily.</text>
</comment>